<organism>
    <name type="scientific">Rattus norvegicus</name>
    <name type="common">Rat</name>
    <dbReference type="NCBI Taxonomy" id="10116"/>
    <lineage>
        <taxon>Eukaryota</taxon>
        <taxon>Metazoa</taxon>
        <taxon>Chordata</taxon>
        <taxon>Craniata</taxon>
        <taxon>Vertebrata</taxon>
        <taxon>Euteleostomi</taxon>
        <taxon>Mammalia</taxon>
        <taxon>Eutheria</taxon>
        <taxon>Euarchontoglires</taxon>
        <taxon>Glires</taxon>
        <taxon>Rodentia</taxon>
        <taxon>Myomorpha</taxon>
        <taxon>Muroidea</taxon>
        <taxon>Muridae</taxon>
        <taxon>Murinae</taxon>
        <taxon>Rattus</taxon>
    </lineage>
</organism>
<keyword id="KW-0012">Acyltransferase</keyword>
<keyword id="KW-0256">Endoplasmic reticulum</keyword>
<keyword id="KW-0443">Lipid metabolism</keyword>
<keyword id="KW-0472">Membrane</keyword>
<keyword id="KW-0663">Pyridoxal phosphate</keyword>
<keyword id="KW-1185">Reference proteome</keyword>
<keyword id="KW-0746">Sphingolipid metabolism</keyword>
<keyword id="KW-0808">Transferase</keyword>
<keyword id="KW-0812">Transmembrane</keyword>
<keyword id="KW-1133">Transmembrane helix</keyword>
<proteinExistence type="evidence at protein level"/>
<accession>Q3B7D2</accession>
<accession>F1LSV4</accession>
<protein>
    <recommendedName>
        <fullName evidence="6">Serine palmitoyltransferase 2</fullName>
        <ecNumber evidence="2">2.3.1.50</ecNumber>
    </recommendedName>
    <alternativeName>
        <fullName>Long chain base biosynthesis protein 2</fullName>
        <shortName>LCB 2</shortName>
    </alternativeName>
    <alternativeName>
        <fullName>Serine-palmitoyl-CoA transferase 2</fullName>
        <shortName>SPT 2</shortName>
    </alternativeName>
</protein>
<sequence>MRPEPGGCCCRRPMRANGCVKNGEVRNGYLRSSTATIAAAGQIHHITENGGLYKRPFNEAFEETPMLVAVLTYVGYGVLTLFGYLRDFLRHWRIEKCHHATEREEQKDFVSLYQDFENFYTRNLYMRIRDNWNRPICSVPGAKVDIMERQSHDYNWSFKYTGNIIKGVINMGSYNYLGFARNTGSCQEAAAEVLKTYGAGVCSTRQEIGNLDKHEELEKLVARFLGVEAALTYGMGFATNSMNIPALVGKGCLILSDELNHASLVLGARLSGATIRIFKHNNMQSLEKLLKDAIVYGQPRTRRPWKKILILVEGIYSMEGSIVRLPEVIALKKKYKAYLYLDEAHSIGALGPSGRGVVDYFGLDPEDVDVMMGTFTKSFGASGGYIGGKKELIDYLRTHSHSAVYATSMSPPVMEQIITSMKCIMGQDGTSLGKECIQQLAENTRYFRRRLKEMGFIIYGNEDSPVVPLMLYMPAKIGAFGREMLKRNIGVVVVGFPATPIIESRARFCLSAAHTKEILDTALKEIDEVGDLLQLKYSRHRPLPLLDRPFDETTYEETED</sequence>
<dbReference type="EC" id="2.3.1.50" evidence="2"/>
<dbReference type="EMBL" id="AABR07065137">
    <property type="status" value="NOT_ANNOTATED_CDS"/>
    <property type="molecule type" value="Genomic_DNA"/>
</dbReference>
<dbReference type="EMBL" id="BC107662">
    <property type="protein sequence ID" value="AAI07663.1"/>
    <property type="molecule type" value="mRNA"/>
</dbReference>
<dbReference type="RefSeq" id="NP_001032174.1">
    <property type="nucleotide sequence ID" value="NM_001037097.3"/>
</dbReference>
<dbReference type="SMR" id="Q3B7D2"/>
<dbReference type="FunCoup" id="Q3B7D2">
    <property type="interactions" value="1692"/>
</dbReference>
<dbReference type="STRING" id="10116.ENSRNOP00000016324"/>
<dbReference type="PhosphoSitePlus" id="Q3B7D2"/>
<dbReference type="jPOST" id="Q3B7D2"/>
<dbReference type="PaxDb" id="10116-ENSRNOP00000016324"/>
<dbReference type="GeneID" id="366697"/>
<dbReference type="KEGG" id="rno:366697"/>
<dbReference type="UCSC" id="RGD:1305447">
    <property type="organism name" value="rat"/>
</dbReference>
<dbReference type="AGR" id="RGD:1305447"/>
<dbReference type="CTD" id="9517"/>
<dbReference type="RGD" id="1305447">
    <property type="gene designation" value="Sptlc2"/>
</dbReference>
<dbReference type="eggNOG" id="KOG1357">
    <property type="taxonomic scope" value="Eukaryota"/>
</dbReference>
<dbReference type="InParanoid" id="Q3B7D2"/>
<dbReference type="OrthoDB" id="65434at2759"/>
<dbReference type="PhylomeDB" id="Q3B7D2"/>
<dbReference type="TreeFam" id="TF300452"/>
<dbReference type="BRENDA" id="2.3.1.50">
    <property type="organism ID" value="5301"/>
</dbReference>
<dbReference type="Reactome" id="R-RNO-1660661">
    <property type="pathway name" value="Sphingolipid de novo biosynthesis"/>
</dbReference>
<dbReference type="UniPathway" id="UPA00222"/>
<dbReference type="PRO" id="PR:Q3B7D2"/>
<dbReference type="Proteomes" id="UP000002494">
    <property type="component" value="Unplaced"/>
</dbReference>
<dbReference type="GO" id="GO:0005789">
    <property type="term" value="C:endoplasmic reticulum membrane"/>
    <property type="evidence" value="ECO:0007669"/>
    <property type="project" value="UniProtKB-SubCell"/>
</dbReference>
<dbReference type="GO" id="GO:0017059">
    <property type="term" value="C:serine palmitoyltransferase complex"/>
    <property type="evidence" value="ECO:0000266"/>
    <property type="project" value="RGD"/>
</dbReference>
<dbReference type="GO" id="GO:0030170">
    <property type="term" value="F:pyridoxal phosphate binding"/>
    <property type="evidence" value="ECO:0007669"/>
    <property type="project" value="InterPro"/>
</dbReference>
<dbReference type="GO" id="GO:0004758">
    <property type="term" value="F:serine C-palmitoyltransferase activity"/>
    <property type="evidence" value="ECO:0000250"/>
    <property type="project" value="UniProtKB"/>
</dbReference>
<dbReference type="GO" id="GO:0060612">
    <property type="term" value="P:adipose tissue development"/>
    <property type="evidence" value="ECO:0000250"/>
    <property type="project" value="UniProtKB"/>
</dbReference>
<dbReference type="GO" id="GO:0046513">
    <property type="term" value="P:ceramide biosynthetic process"/>
    <property type="evidence" value="ECO:0000266"/>
    <property type="project" value="RGD"/>
</dbReference>
<dbReference type="GO" id="GO:1904504">
    <property type="term" value="P:positive regulation of lipophagy"/>
    <property type="evidence" value="ECO:0000266"/>
    <property type="project" value="RGD"/>
</dbReference>
<dbReference type="GO" id="GO:0035902">
    <property type="term" value="P:response to immobilization stress"/>
    <property type="evidence" value="ECO:0000270"/>
    <property type="project" value="RGD"/>
</dbReference>
<dbReference type="GO" id="GO:0046511">
    <property type="term" value="P:sphinganine biosynthetic process"/>
    <property type="evidence" value="ECO:0000266"/>
    <property type="project" value="RGD"/>
</dbReference>
<dbReference type="GO" id="GO:0030148">
    <property type="term" value="P:sphingolipid biosynthetic process"/>
    <property type="evidence" value="ECO:0000250"/>
    <property type="project" value="UniProtKB"/>
</dbReference>
<dbReference type="GO" id="GO:0006686">
    <property type="term" value="P:sphingomyelin biosynthetic process"/>
    <property type="evidence" value="ECO:0000266"/>
    <property type="project" value="RGD"/>
</dbReference>
<dbReference type="GO" id="GO:0046512">
    <property type="term" value="P:sphingosine biosynthetic process"/>
    <property type="evidence" value="ECO:0000266"/>
    <property type="project" value="RGD"/>
</dbReference>
<dbReference type="CDD" id="cd06454">
    <property type="entry name" value="KBL_like"/>
    <property type="match status" value="1"/>
</dbReference>
<dbReference type="FunFam" id="3.90.1150.10:FF:000004">
    <property type="entry name" value="2-amino-3-ketobutyrate coenzyme A ligase"/>
    <property type="match status" value="1"/>
</dbReference>
<dbReference type="FunFam" id="3.40.640.10:FF:000047">
    <property type="entry name" value="serine palmitoyltransferase 2 isoform X1"/>
    <property type="match status" value="1"/>
</dbReference>
<dbReference type="Gene3D" id="3.90.1150.10">
    <property type="entry name" value="Aspartate Aminotransferase, domain 1"/>
    <property type="match status" value="1"/>
</dbReference>
<dbReference type="Gene3D" id="3.40.640.10">
    <property type="entry name" value="Type I PLP-dependent aspartate aminotransferase-like (Major domain)"/>
    <property type="match status" value="1"/>
</dbReference>
<dbReference type="InterPro" id="IPR001917">
    <property type="entry name" value="Aminotrans_II_pyridoxalP_BS"/>
</dbReference>
<dbReference type="InterPro" id="IPR004839">
    <property type="entry name" value="Aminotransferase_I/II_large"/>
</dbReference>
<dbReference type="InterPro" id="IPR050087">
    <property type="entry name" value="AON_synthase_class-II"/>
</dbReference>
<dbReference type="InterPro" id="IPR015424">
    <property type="entry name" value="PyrdxlP-dep_Trfase"/>
</dbReference>
<dbReference type="InterPro" id="IPR015421">
    <property type="entry name" value="PyrdxlP-dep_Trfase_major"/>
</dbReference>
<dbReference type="InterPro" id="IPR015422">
    <property type="entry name" value="PyrdxlP-dep_Trfase_small"/>
</dbReference>
<dbReference type="PANTHER" id="PTHR13693">
    <property type="entry name" value="CLASS II AMINOTRANSFERASE/8-AMINO-7-OXONONANOATE SYNTHASE"/>
    <property type="match status" value="1"/>
</dbReference>
<dbReference type="PANTHER" id="PTHR13693:SF79">
    <property type="entry name" value="SERINE PALMITOYLTRANSFERASE 2"/>
    <property type="match status" value="1"/>
</dbReference>
<dbReference type="Pfam" id="PF00155">
    <property type="entry name" value="Aminotran_1_2"/>
    <property type="match status" value="1"/>
</dbReference>
<dbReference type="SUPFAM" id="SSF53383">
    <property type="entry name" value="PLP-dependent transferases"/>
    <property type="match status" value="1"/>
</dbReference>
<dbReference type="PROSITE" id="PS00599">
    <property type="entry name" value="AA_TRANSFER_CLASS_2"/>
    <property type="match status" value="1"/>
</dbReference>
<evidence type="ECO:0000250" key="1"/>
<evidence type="ECO:0000250" key="2">
    <source>
        <dbReference type="UniProtKB" id="O15270"/>
    </source>
</evidence>
<evidence type="ECO:0000250" key="3">
    <source>
        <dbReference type="UniProtKB" id="P97363"/>
    </source>
</evidence>
<evidence type="ECO:0000255" key="4"/>
<evidence type="ECO:0000269" key="5">
    <source>
    </source>
</evidence>
<evidence type="ECO:0000305" key="6"/>
<evidence type="ECO:0000312" key="7">
    <source>
        <dbReference type="RGD" id="1305447"/>
    </source>
</evidence>
<name>SPTC2_RAT</name>
<feature type="chain" id="PRO_0000446339" description="Serine palmitoyltransferase 2">
    <location>
        <begin position="1"/>
        <end position="560"/>
    </location>
</feature>
<feature type="transmembrane region" description="Helical" evidence="4">
    <location>
        <begin position="65"/>
        <end position="85"/>
    </location>
</feature>
<feature type="modified residue" description="N6-(pyridoxal phosphate)lysine" evidence="1">
    <location>
        <position position="377"/>
    </location>
</feature>
<feature type="sequence conflict" description="In Ref. 1; AABR07065137." evidence="6" ref="1">
    <original>LDT</original>
    <variation>PGE</variation>
    <location>
        <begin position="519"/>
        <end position="521"/>
    </location>
</feature>
<reference key="1">
    <citation type="journal article" date="2004" name="Nature">
        <title>Genome sequence of the Brown Norway rat yields insights into mammalian evolution.</title>
        <authorList>
            <person name="Gibbs R.A."/>
            <person name="Weinstock G.M."/>
            <person name="Metzker M.L."/>
            <person name="Muzny D.M."/>
            <person name="Sodergren E.J."/>
            <person name="Scherer S."/>
            <person name="Scott G."/>
            <person name="Steffen D."/>
            <person name="Worley K.C."/>
            <person name="Burch P.E."/>
            <person name="Okwuonu G."/>
            <person name="Hines S."/>
            <person name="Lewis L."/>
            <person name="Deramo C."/>
            <person name="Delgado O."/>
            <person name="Dugan-Rocha S."/>
            <person name="Miner G."/>
            <person name="Morgan M."/>
            <person name="Hawes A."/>
            <person name="Gill R."/>
            <person name="Holt R.A."/>
            <person name="Adams M.D."/>
            <person name="Amanatides P.G."/>
            <person name="Baden-Tillson H."/>
            <person name="Barnstead M."/>
            <person name="Chin S."/>
            <person name="Evans C.A."/>
            <person name="Ferriera S."/>
            <person name="Fosler C."/>
            <person name="Glodek A."/>
            <person name="Gu Z."/>
            <person name="Jennings D."/>
            <person name="Kraft C.L."/>
            <person name="Nguyen T."/>
            <person name="Pfannkoch C.M."/>
            <person name="Sitter C."/>
            <person name="Sutton G.G."/>
            <person name="Venter J.C."/>
            <person name="Woodage T."/>
            <person name="Smith D."/>
            <person name="Lee H.-M."/>
            <person name="Gustafson E."/>
            <person name="Cahill P."/>
            <person name="Kana A."/>
            <person name="Doucette-Stamm L."/>
            <person name="Weinstock K."/>
            <person name="Fechtel K."/>
            <person name="Weiss R.B."/>
            <person name="Dunn D.M."/>
            <person name="Green E.D."/>
            <person name="Blakesley R.W."/>
            <person name="Bouffard G.G."/>
            <person name="De Jong P.J."/>
            <person name="Osoegawa K."/>
            <person name="Zhu B."/>
            <person name="Marra M."/>
            <person name="Schein J."/>
            <person name="Bosdet I."/>
            <person name="Fjell C."/>
            <person name="Jones S."/>
            <person name="Krzywinski M."/>
            <person name="Mathewson C."/>
            <person name="Siddiqui A."/>
            <person name="Wye N."/>
            <person name="McPherson J."/>
            <person name="Zhao S."/>
            <person name="Fraser C.M."/>
            <person name="Shetty J."/>
            <person name="Shatsman S."/>
            <person name="Geer K."/>
            <person name="Chen Y."/>
            <person name="Abramzon S."/>
            <person name="Nierman W.C."/>
            <person name="Havlak P.H."/>
            <person name="Chen R."/>
            <person name="Durbin K.J."/>
            <person name="Egan A."/>
            <person name="Ren Y."/>
            <person name="Song X.-Z."/>
            <person name="Li B."/>
            <person name="Liu Y."/>
            <person name="Qin X."/>
            <person name="Cawley S."/>
            <person name="Cooney A.J."/>
            <person name="D'Souza L.M."/>
            <person name="Martin K."/>
            <person name="Wu J.Q."/>
            <person name="Gonzalez-Garay M.L."/>
            <person name="Jackson A.R."/>
            <person name="Kalafus K.J."/>
            <person name="McLeod M.P."/>
            <person name="Milosavljevic A."/>
            <person name="Virk D."/>
            <person name="Volkov A."/>
            <person name="Wheeler D.A."/>
            <person name="Zhang Z."/>
            <person name="Bailey J.A."/>
            <person name="Eichler E.E."/>
            <person name="Tuzun E."/>
            <person name="Birney E."/>
            <person name="Mongin E."/>
            <person name="Ureta-Vidal A."/>
            <person name="Woodwark C."/>
            <person name="Zdobnov E."/>
            <person name="Bork P."/>
            <person name="Suyama M."/>
            <person name="Torrents D."/>
            <person name="Alexandersson M."/>
            <person name="Trask B.J."/>
            <person name="Young J.M."/>
            <person name="Huang H."/>
            <person name="Wang H."/>
            <person name="Xing H."/>
            <person name="Daniels S."/>
            <person name="Gietzen D."/>
            <person name="Schmidt J."/>
            <person name="Stevens K."/>
            <person name="Vitt U."/>
            <person name="Wingrove J."/>
            <person name="Camara F."/>
            <person name="Mar Alba M."/>
            <person name="Abril J.F."/>
            <person name="Guigo R."/>
            <person name="Smit A."/>
            <person name="Dubchak I."/>
            <person name="Rubin E.M."/>
            <person name="Couronne O."/>
            <person name="Poliakov A."/>
            <person name="Huebner N."/>
            <person name="Ganten D."/>
            <person name="Goesele C."/>
            <person name="Hummel O."/>
            <person name="Kreitler T."/>
            <person name="Lee Y.-A."/>
            <person name="Monti J."/>
            <person name="Schulz H."/>
            <person name="Zimdahl H."/>
            <person name="Himmelbauer H."/>
            <person name="Lehrach H."/>
            <person name="Jacob H.J."/>
            <person name="Bromberg S."/>
            <person name="Gullings-Handley J."/>
            <person name="Jensen-Seaman M.I."/>
            <person name="Kwitek A.E."/>
            <person name="Lazar J."/>
            <person name="Pasko D."/>
            <person name="Tonellato P.J."/>
            <person name="Twigger S."/>
            <person name="Ponting C.P."/>
            <person name="Duarte J.M."/>
            <person name="Rice S."/>
            <person name="Goodstadt L."/>
            <person name="Beatson S.A."/>
            <person name="Emes R.D."/>
            <person name="Winter E.E."/>
            <person name="Webber C."/>
            <person name="Brandt P."/>
            <person name="Nyakatura G."/>
            <person name="Adetobi M."/>
            <person name="Chiaromonte F."/>
            <person name="Elnitski L."/>
            <person name="Eswara P."/>
            <person name="Hardison R.C."/>
            <person name="Hou M."/>
            <person name="Kolbe D."/>
            <person name="Makova K."/>
            <person name="Miller W."/>
            <person name="Nekrutenko A."/>
            <person name="Riemer C."/>
            <person name="Schwartz S."/>
            <person name="Taylor J."/>
            <person name="Yang S."/>
            <person name="Zhang Y."/>
            <person name="Lindpaintner K."/>
            <person name="Andrews T.D."/>
            <person name="Caccamo M."/>
            <person name="Clamp M."/>
            <person name="Clarke L."/>
            <person name="Curwen V."/>
            <person name="Durbin R.M."/>
            <person name="Eyras E."/>
            <person name="Searle S.M."/>
            <person name="Cooper G.M."/>
            <person name="Batzoglou S."/>
            <person name="Brudno M."/>
            <person name="Sidow A."/>
            <person name="Stone E.A."/>
            <person name="Payseur B.A."/>
            <person name="Bourque G."/>
            <person name="Lopez-Otin C."/>
            <person name="Puente X.S."/>
            <person name="Chakrabarti K."/>
            <person name="Chatterji S."/>
            <person name="Dewey C."/>
            <person name="Pachter L."/>
            <person name="Bray N."/>
            <person name="Yap V.B."/>
            <person name="Caspi A."/>
            <person name="Tesler G."/>
            <person name="Pevzner P.A."/>
            <person name="Haussler D."/>
            <person name="Roskin K.M."/>
            <person name="Baertsch R."/>
            <person name="Clawson H."/>
            <person name="Furey T.S."/>
            <person name="Hinrichs A.S."/>
            <person name="Karolchik D."/>
            <person name="Kent W.J."/>
            <person name="Rosenbloom K.R."/>
            <person name="Trumbower H."/>
            <person name="Weirauch M."/>
            <person name="Cooper D.N."/>
            <person name="Stenson P.D."/>
            <person name="Ma B."/>
            <person name="Brent M."/>
            <person name="Arumugam M."/>
            <person name="Shteynberg D."/>
            <person name="Copley R.R."/>
            <person name="Taylor M.S."/>
            <person name="Riethman H."/>
            <person name="Mudunuri U."/>
            <person name="Peterson J."/>
            <person name="Guyer M."/>
            <person name="Felsenfeld A."/>
            <person name="Old S."/>
            <person name="Mockrin S."/>
            <person name="Collins F.S."/>
        </authorList>
    </citation>
    <scope>NUCLEOTIDE SEQUENCE [LARGE SCALE GENOMIC DNA]</scope>
    <source>
        <strain>Brown Norway</strain>
    </source>
</reference>
<reference key="2">
    <citation type="journal article" date="2004" name="Genome Res.">
        <title>The status, quality, and expansion of the NIH full-length cDNA project: the Mammalian Gene Collection (MGC).</title>
        <authorList>
            <consortium name="The MGC Project Team"/>
        </authorList>
    </citation>
    <scope>NUCLEOTIDE SEQUENCE [LARGE SCALE MRNA]</scope>
</reference>
<reference key="3">
    <citation type="journal article" date="2011" name="J. Neurosci.">
        <title>MicroRNA-137/181c regulates serine palmitoyltransferase and in turn amyloid beta, novel targets in sporadic Alzheimer's disease.</title>
        <authorList>
            <person name="Geekiyanage H."/>
            <person name="Chan C."/>
        </authorList>
    </citation>
    <scope>INDUCTION BY MIRNA</scope>
    <scope>TISSUE SPECIFICITY</scope>
</reference>
<comment type="function">
    <text evidence="2 3">Component of the serine palmitoyltransferase multisubunit enzyme (SPT) that catalyzes the initial and rate-limiting step in sphingolipid biosynthesis by condensing L-serine and activated acyl-CoA (most commonly palmitoyl-CoA) to form long-chain bases. The SPT complex is composed of SPTLC1, SPTLC2 or SPTLC3 and SPTSSA or SPTSSB. Within this complex, the heterodimer consisting of SPTLC1 and SPTLC2/SPTLC3 forms the catalytic core. The composition of the serine palmitoyltransferase (SPT) complex determines the substrate preference. The SPTLC1-SPTLC2-SPTSSA complex shows a strong preference for C16-CoA substrate, while the SPTLC1-SPTLC3-SPTSSA isozyme uses both C14-CoA and C16-CoA as substrates, with a slight preference for C14-CoA. The SPTLC1-SPTLC2-SPTSSB complex shows a strong preference for C18-CoA substrate, while the SPTLC1-SPTLC3-SPTSSB isozyme displays an ability to use a broader range of acyl-CoAs, without apparent preference (By similarity). Crucial for adipogenesis (By similarity).</text>
</comment>
<comment type="catalytic activity">
    <reaction evidence="2">
        <text>L-serine + hexadecanoyl-CoA + H(+) = 3-oxosphinganine + CO2 + CoA</text>
        <dbReference type="Rhea" id="RHEA:14761"/>
        <dbReference type="ChEBI" id="CHEBI:15378"/>
        <dbReference type="ChEBI" id="CHEBI:16526"/>
        <dbReference type="ChEBI" id="CHEBI:33384"/>
        <dbReference type="ChEBI" id="CHEBI:57287"/>
        <dbReference type="ChEBI" id="CHEBI:57379"/>
        <dbReference type="ChEBI" id="CHEBI:58299"/>
        <dbReference type="EC" id="2.3.1.50"/>
    </reaction>
    <physiologicalReaction direction="left-to-right" evidence="2">
        <dbReference type="Rhea" id="RHEA:14762"/>
    </physiologicalReaction>
</comment>
<comment type="catalytic activity">
    <reaction evidence="2">
        <text>octadecanoyl-CoA + L-serine + H(+) = 3-oxoeicosasphinganine + CO2 + CoA</text>
        <dbReference type="Rhea" id="RHEA:33683"/>
        <dbReference type="ChEBI" id="CHEBI:15378"/>
        <dbReference type="ChEBI" id="CHEBI:16526"/>
        <dbReference type="ChEBI" id="CHEBI:33384"/>
        <dbReference type="ChEBI" id="CHEBI:57287"/>
        <dbReference type="ChEBI" id="CHEBI:57394"/>
        <dbReference type="ChEBI" id="CHEBI:65073"/>
    </reaction>
    <physiologicalReaction direction="left-to-right" evidence="2">
        <dbReference type="Rhea" id="RHEA:33684"/>
    </physiologicalReaction>
</comment>
<comment type="cofactor">
    <cofactor evidence="1">
        <name>pyridoxal 5'-phosphate</name>
        <dbReference type="ChEBI" id="CHEBI:597326"/>
    </cofactor>
</comment>
<comment type="activity regulation">
    <text evidence="2">SPT complex catalytic activity is negatively regulated by ORMDL proteins, including ORMDL3, in the presence of ceramides. This mechanism allows to maintain ceramide levels at sufficient concentrations for the production of complex sphingolipids, but which prevents the accumulation of ceramides to levels that trigger apoptosis.</text>
</comment>
<comment type="pathway">
    <text evidence="2">Lipid metabolism; sphingolipid metabolism.</text>
</comment>
<comment type="subunit">
    <text evidence="2">Component of the serine palmitoyltransferase (SPT) complex, which is composed of SPTLC1, SPTLC2 or SPTLC3 and SPTSSA or SPTSSB. The heterodimer consisting of SPTLC1 and SPTLC2/SPTLC3 forms the catalytic core of the enzyme, while SPTSSA or SPTSSB subunits determine substrate specificity. SPT also interacts with ORMDL proteins, especially ORMDL3, which negatively regulate SPT activity in the presence of ceramides. Forms dimers of heterodimers with SPTLC1.</text>
</comment>
<comment type="subcellular location">
    <subcellularLocation>
        <location evidence="3">Endoplasmic reticulum membrane</location>
        <topology evidence="3">Single-pass membrane protein</topology>
    </subcellularLocation>
</comment>
<comment type="tissue specificity">
    <text evidence="5">Expressed in astrocytes.</text>
</comment>
<comment type="induction">
    <text evidence="5">Expression in increased by palmitate at protein level but not mRNA level (PubMed:21994399). Expression is down-regulated by microRNA miR-9, miR29a and miR-29b-1 (at protein level) (PubMed:21994399).</text>
</comment>
<comment type="similarity">
    <text evidence="6">Belongs to the class-II pyridoxal-phosphate-dependent aminotransferase family.</text>
</comment>
<gene>
    <name evidence="7" type="primary">Sptlc2</name>
    <name type="synonym">Lcb2</name>
    <name evidence="7" type="synonym">Pomt2</name>
</gene>